<keyword id="KW-0256">Endoplasmic reticulum</keyword>
<keyword id="KW-0472">Membrane</keyword>
<keyword id="KW-0653">Protein transport</keyword>
<keyword id="KW-1185">Reference proteome</keyword>
<keyword id="KW-0811">Translocation</keyword>
<keyword id="KW-0812">Transmembrane</keyword>
<keyword id="KW-1133">Transmembrane helix</keyword>
<keyword id="KW-0813">Transport</keyword>
<reference key="1">
    <citation type="journal article" date="1994" name="Plant J.">
        <title>Toward cataloguing all rice genes: large-scale sequencing of randomly chosen rice cDNAs from a callus cDNA library.</title>
        <authorList>
            <person name="Sasaki T."/>
            <person name="Song J."/>
            <person name="Koga-Ban Y."/>
            <person name="Matsui E."/>
            <person name="Fang F."/>
            <person name="Higo H."/>
            <person name="Nagasaki H."/>
            <person name="Hori M."/>
            <person name="Miya M."/>
            <person name="Murayama-Kayano E."/>
            <person name="Takiguchi T."/>
            <person name="Takasuga A."/>
            <person name="Niki T."/>
            <person name="Ishimaru K."/>
            <person name="Ikeda H."/>
            <person name="Yamamoto Y."/>
            <person name="Mukai Y."/>
            <person name="Ohta I."/>
            <person name="Miyadera N."/>
            <person name="Havukkala I."/>
            <person name="Minobe Y."/>
        </authorList>
    </citation>
    <scope>NUCLEOTIDE SEQUENCE [MRNA]</scope>
    <source>
        <strain>cv. Nipponbare</strain>
        <tissue>Callus</tissue>
    </source>
</reference>
<reference key="2">
    <citation type="journal article" date="2005" name="Nature">
        <title>The map-based sequence of the rice genome.</title>
        <authorList>
            <consortium name="International rice genome sequencing project (IRGSP)"/>
        </authorList>
    </citation>
    <scope>NUCLEOTIDE SEQUENCE [LARGE SCALE GENOMIC DNA]</scope>
    <source>
        <strain>cv. Nipponbare</strain>
    </source>
</reference>
<reference key="3">
    <citation type="journal article" date="2008" name="Nucleic Acids Res.">
        <title>The rice annotation project database (RAP-DB): 2008 update.</title>
        <authorList>
            <consortium name="The rice annotation project (RAP)"/>
        </authorList>
    </citation>
    <scope>GENOME REANNOTATION</scope>
    <source>
        <strain>cv. Nipponbare</strain>
    </source>
</reference>
<reference key="4">
    <citation type="journal article" date="2013" name="Rice">
        <title>Improvement of the Oryza sativa Nipponbare reference genome using next generation sequence and optical map data.</title>
        <authorList>
            <person name="Kawahara Y."/>
            <person name="de la Bastide M."/>
            <person name="Hamilton J.P."/>
            <person name="Kanamori H."/>
            <person name="McCombie W.R."/>
            <person name="Ouyang S."/>
            <person name="Schwartz D.C."/>
            <person name="Tanaka T."/>
            <person name="Wu J."/>
            <person name="Zhou S."/>
            <person name="Childs K.L."/>
            <person name="Davidson R.M."/>
            <person name="Lin H."/>
            <person name="Quesada-Ocampo L."/>
            <person name="Vaillancourt B."/>
            <person name="Sakai H."/>
            <person name="Lee S.S."/>
            <person name="Kim J."/>
            <person name="Numa H."/>
            <person name="Itoh T."/>
            <person name="Buell C.R."/>
            <person name="Matsumoto T."/>
        </authorList>
    </citation>
    <scope>GENOME REANNOTATION</scope>
    <source>
        <strain>cv. Nipponbare</strain>
    </source>
</reference>
<reference key="5">
    <citation type="journal article" date="2005" name="PLoS Biol.">
        <title>The genomes of Oryza sativa: a history of duplications.</title>
        <authorList>
            <person name="Yu J."/>
            <person name="Wang J."/>
            <person name="Lin W."/>
            <person name="Li S."/>
            <person name="Li H."/>
            <person name="Zhou J."/>
            <person name="Ni P."/>
            <person name="Dong W."/>
            <person name="Hu S."/>
            <person name="Zeng C."/>
            <person name="Zhang J."/>
            <person name="Zhang Y."/>
            <person name="Li R."/>
            <person name="Xu Z."/>
            <person name="Li S."/>
            <person name="Li X."/>
            <person name="Zheng H."/>
            <person name="Cong L."/>
            <person name="Lin L."/>
            <person name="Yin J."/>
            <person name="Geng J."/>
            <person name="Li G."/>
            <person name="Shi J."/>
            <person name="Liu J."/>
            <person name="Lv H."/>
            <person name="Li J."/>
            <person name="Wang J."/>
            <person name="Deng Y."/>
            <person name="Ran L."/>
            <person name="Shi X."/>
            <person name="Wang X."/>
            <person name="Wu Q."/>
            <person name="Li C."/>
            <person name="Ren X."/>
            <person name="Wang J."/>
            <person name="Wang X."/>
            <person name="Li D."/>
            <person name="Liu D."/>
            <person name="Zhang X."/>
            <person name="Ji Z."/>
            <person name="Zhao W."/>
            <person name="Sun Y."/>
            <person name="Zhang Z."/>
            <person name="Bao J."/>
            <person name="Han Y."/>
            <person name="Dong L."/>
            <person name="Ji J."/>
            <person name="Chen P."/>
            <person name="Wu S."/>
            <person name="Liu J."/>
            <person name="Xiao Y."/>
            <person name="Bu D."/>
            <person name="Tan J."/>
            <person name="Yang L."/>
            <person name="Ye C."/>
            <person name="Zhang J."/>
            <person name="Xu J."/>
            <person name="Zhou Y."/>
            <person name="Yu Y."/>
            <person name="Zhang B."/>
            <person name="Zhuang S."/>
            <person name="Wei H."/>
            <person name="Liu B."/>
            <person name="Lei M."/>
            <person name="Yu H."/>
            <person name="Li Y."/>
            <person name="Xu H."/>
            <person name="Wei S."/>
            <person name="He X."/>
            <person name="Fang L."/>
            <person name="Zhang Z."/>
            <person name="Zhang Y."/>
            <person name="Huang X."/>
            <person name="Su Z."/>
            <person name="Tong W."/>
            <person name="Li J."/>
            <person name="Tong Z."/>
            <person name="Li S."/>
            <person name="Ye J."/>
            <person name="Wang L."/>
            <person name="Fang L."/>
            <person name="Lei T."/>
            <person name="Chen C.-S."/>
            <person name="Chen H.-C."/>
            <person name="Xu Z."/>
            <person name="Li H."/>
            <person name="Huang H."/>
            <person name="Zhang F."/>
            <person name="Xu H."/>
            <person name="Li N."/>
            <person name="Zhao C."/>
            <person name="Li S."/>
            <person name="Dong L."/>
            <person name="Huang Y."/>
            <person name="Li L."/>
            <person name="Xi Y."/>
            <person name="Qi Q."/>
            <person name="Li W."/>
            <person name="Zhang B."/>
            <person name="Hu W."/>
            <person name="Zhang Y."/>
            <person name="Tian X."/>
            <person name="Jiao Y."/>
            <person name="Liang X."/>
            <person name="Jin J."/>
            <person name="Gao L."/>
            <person name="Zheng W."/>
            <person name="Hao B."/>
            <person name="Liu S.-M."/>
            <person name="Wang W."/>
            <person name="Yuan L."/>
            <person name="Cao M."/>
            <person name="McDermott J."/>
            <person name="Samudrala R."/>
            <person name="Wang J."/>
            <person name="Wong G.K.-S."/>
            <person name="Yang H."/>
        </authorList>
    </citation>
    <scope>NUCLEOTIDE SEQUENCE [LARGE SCALE GENOMIC DNA]</scope>
    <source>
        <strain>cv. Nipponbare</strain>
    </source>
</reference>
<reference key="6">
    <citation type="journal article" date="2003" name="Science">
        <title>Collection, mapping, and annotation of over 28,000 cDNA clones from japonica rice.</title>
        <authorList>
            <consortium name="The rice full-length cDNA consortium"/>
        </authorList>
    </citation>
    <scope>NUCLEOTIDE SEQUENCE [LARGE SCALE MRNA]</scope>
    <source>
        <strain>cv. Nipponbare</strain>
    </source>
</reference>
<protein>
    <recommendedName>
        <fullName>Protein transport protein Sec61 subunit gamma</fullName>
    </recommendedName>
</protein>
<evidence type="ECO:0000250" key="1"/>
<evidence type="ECO:0000255" key="2"/>
<evidence type="ECO:0000305" key="3"/>
<evidence type="ECO:0000312" key="4">
    <source>
        <dbReference type="EMBL" id="EAZ21956.1"/>
    </source>
</evidence>
<feature type="chain" id="PRO_0000104207" description="Protein transport protein Sec61 subunit gamma">
    <location>
        <begin position="1"/>
        <end position="69"/>
    </location>
</feature>
<feature type="topological domain" description="Cytoplasmic" evidence="2">
    <location>
        <begin position="1"/>
        <end position="32"/>
    </location>
</feature>
<feature type="transmembrane region" description="Helical" evidence="2">
    <location>
        <begin position="33"/>
        <end position="61"/>
    </location>
</feature>
<feature type="topological domain" description="Extracellular" evidence="2">
    <location>
        <begin position="62"/>
        <end position="69"/>
    </location>
</feature>
<gene>
    <name type="ordered locus">Os02g0178400</name>
    <name type="ordered locus">LOC_Os02g08180</name>
    <name evidence="4" type="ORF">OsJ_05608</name>
    <name type="ORF">P0544B02.4</name>
</gene>
<comment type="function">
    <text evidence="1">Necessary for protein translocation in the endoplasmic reticulum.</text>
</comment>
<comment type="subunit">
    <text evidence="1">Heterotrimeric complex composed of SEC61-alpha, SEC61-beta and SEC61-gamma.</text>
</comment>
<comment type="subcellular location">
    <subcellularLocation>
        <location evidence="1">Endoplasmic reticulum membrane</location>
        <topology evidence="1">Single-pass membrane protein</topology>
    </subcellularLocation>
</comment>
<comment type="similarity">
    <text evidence="3">Belongs to the SecE/SEC61-gamma family.</text>
</comment>
<name>SC61G_ORYSJ</name>
<accession>P38385</accession>
<accession>Q0E3E8</accession>
<accession>Q6ETM3</accession>
<proteinExistence type="inferred from homology"/>
<organism>
    <name type="scientific">Oryza sativa subsp. japonica</name>
    <name type="common">Rice</name>
    <dbReference type="NCBI Taxonomy" id="39947"/>
    <lineage>
        <taxon>Eukaryota</taxon>
        <taxon>Viridiplantae</taxon>
        <taxon>Streptophyta</taxon>
        <taxon>Embryophyta</taxon>
        <taxon>Tracheophyta</taxon>
        <taxon>Spermatophyta</taxon>
        <taxon>Magnoliopsida</taxon>
        <taxon>Liliopsida</taxon>
        <taxon>Poales</taxon>
        <taxon>Poaceae</taxon>
        <taxon>BOP clade</taxon>
        <taxon>Oryzoideae</taxon>
        <taxon>Oryzeae</taxon>
        <taxon>Oryzinae</taxon>
        <taxon>Oryza</taxon>
        <taxon>Oryza sativa</taxon>
    </lineage>
</organism>
<sequence>MDAVDSVVDPLREFAKDSVRLVKRCHKPDRKEFTKVAARTAIGFVVMGFVGFFVKLIFIPINNIIVGSG</sequence>
<dbReference type="EMBL" id="D15706">
    <property type="status" value="NOT_ANNOTATED_CDS"/>
    <property type="molecule type" value="mRNA"/>
</dbReference>
<dbReference type="EMBL" id="AP004840">
    <property type="protein sequence ID" value="BAD27997.1"/>
    <property type="molecule type" value="Genomic_DNA"/>
</dbReference>
<dbReference type="EMBL" id="AP008208">
    <property type="protein sequence ID" value="BAF07990.1"/>
    <property type="molecule type" value="Genomic_DNA"/>
</dbReference>
<dbReference type="EMBL" id="AP014958">
    <property type="protein sequence ID" value="BAS77279.1"/>
    <property type="molecule type" value="Genomic_DNA"/>
</dbReference>
<dbReference type="EMBL" id="CM000139">
    <property type="protein sequence ID" value="EAZ21956.1"/>
    <property type="molecule type" value="Genomic_DNA"/>
</dbReference>
<dbReference type="EMBL" id="AK063815">
    <property type="protein sequence ID" value="BAG88874.1"/>
    <property type="molecule type" value="mRNA"/>
</dbReference>
<dbReference type="EMBL" id="AK121516">
    <property type="protein sequence ID" value="BAH00530.1"/>
    <property type="molecule type" value="mRNA"/>
</dbReference>
<dbReference type="RefSeq" id="XP_015626276.1">
    <property type="nucleotide sequence ID" value="XM_015770790.1"/>
</dbReference>
<dbReference type="SMR" id="P38385"/>
<dbReference type="FunCoup" id="P38385">
    <property type="interactions" value="2468"/>
</dbReference>
<dbReference type="STRING" id="39947.P38385"/>
<dbReference type="PaxDb" id="39947-P38385"/>
<dbReference type="EnsemblPlants" id="Os02t0178400-01">
    <property type="protein sequence ID" value="Os02t0178400-01"/>
    <property type="gene ID" value="Os02g0178400"/>
</dbReference>
<dbReference type="Gramene" id="Os02t0178400-01">
    <property type="protein sequence ID" value="Os02t0178400-01"/>
    <property type="gene ID" value="Os02g0178400"/>
</dbReference>
<dbReference type="KEGG" id="dosa:Os02g0178400"/>
<dbReference type="eggNOG" id="KOG3498">
    <property type="taxonomic scope" value="Eukaryota"/>
</dbReference>
<dbReference type="HOGENOM" id="CLU_167752_1_1_1"/>
<dbReference type="InParanoid" id="P38385"/>
<dbReference type="OMA" id="KPDQKEY"/>
<dbReference type="OrthoDB" id="628980at2759"/>
<dbReference type="Proteomes" id="UP000000763">
    <property type="component" value="Chromosome 2"/>
</dbReference>
<dbReference type="Proteomes" id="UP000007752">
    <property type="component" value="Chromosome 2"/>
</dbReference>
<dbReference type="Proteomes" id="UP000059680">
    <property type="component" value="Chromosome 2"/>
</dbReference>
<dbReference type="GO" id="GO:0071261">
    <property type="term" value="C:Ssh1 translocon complex"/>
    <property type="evidence" value="ECO:0000318"/>
    <property type="project" value="GO_Central"/>
</dbReference>
<dbReference type="GO" id="GO:0008320">
    <property type="term" value="F:protein transmembrane transporter activity"/>
    <property type="evidence" value="ECO:0000318"/>
    <property type="project" value="GO_Central"/>
</dbReference>
<dbReference type="GO" id="GO:0031204">
    <property type="term" value="P:post-translational protein targeting to membrane, translocation"/>
    <property type="evidence" value="ECO:0000318"/>
    <property type="project" value="GO_Central"/>
</dbReference>
<dbReference type="FunFam" id="1.20.5.820:FF:000001">
    <property type="entry name" value="Transport protein Sec61 subunit gamma"/>
    <property type="match status" value="1"/>
</dbReference>
<dbReference type="Gene3D" id="1.20.5.820">
    <property type="entry name" value="Preprotein translocase SecE subunit"/>
    <property type="match status" value="1"/>
</dbReference>
<dbReference type="HAMAP" id="MF_00422">
    <property type="entry name" value="SecE"/>
    <property type="match status" value="1"/>
</dbReference>
<dbReference type="InterPro" id="IPR023391">
    <property type="entry name" value="Prot_translocase_SecE_dom_sf"/>
</dbReference>
<dbReference type="InterPro" id="IPR008158">
    <property type="entry name" value="Translocase_Sec61-g"/>
</dbReference>
<dbReference type="InterPro" id="IPR001901">
    <property type="entry name" value="Translocase_SecE/Sec61-g"/>
</dbReference>
<dbReference type="NCBIfam" id="TIGR00327">
    <property type="entry name" value="secE_euk_arch"/>
    <property type="match status" value="1"/>
</dbReference>
<dbReference type="PANTHER" id="PTHR12309">
    <property type="entry name" value="SEC61 GAMMA SUBUNIT"/>
    <property type="match status" value="1"/>
</dbReference>
<dbReference type="Pfam" id="PF00584">
    <property type="entry name" value="SecE"/>
    <property type="match status" value="1"/>
</dbReference>
<dbReference type="SUPFAM" id="SSF103456">
    <property type="entry name" value="Preprotein translocase SecE subunit"/>
    <property type="match status" value="1"/>
</dbReference>
<dbReference type="PROSITE" id="PS01067">
    <property type="entry name" value="SECE_SEC61G"/>
    <property type="match status" value="1"/>
</dbReference>